<evidence type="ECO:0000255" key="1">
    <source>
        <dbReference type="HAMAP-Rule" id="MF_01139"/>
    </source>
</evidence>
<keyword id="KW-0460">Magnesium</keyword>
<keyword id="KW-0479">Metal-binding</keyword>
<keyword id="KW-0808">Transferase</keyword>
<gene>
    <name evidence="1" type="primary">uppS</name>
    <name type="ordered locus">spyM18_2033</name>
</gene>
<dbReference type="EC" id="2.5.1.-" evidence="1"/>
<dbReference type="EMBL" id="AE009949">
    <property type="protein sequence ID" value="AAL98510.1"/>
    <property type="molecule type" value="Genomic_DNA"/>
</dbReference>
<dbReference type="RefSeq" id="WP_002982598.1">
    <property type="nucleotide sequence ID" value="NC_003485.1"/>
</dbReference>
<dbReference type="SMR" id="Q8NZB2"/>
<dbReference type="KEGG" id="spm:spyM18_2033"/>
<dbReference type="HOGENOM" id="CLU_038505_1_1_9"/>
<dbReference type="GO" id="GO:0005829">
    <property type="term" value="C:cytosol"/>
    <property type="evidence" value="ECO:0007669"/>
    <property type="project" value="TreeGrafter"/>
</dbReference>
<dbReference type="GO" id="GO:0008834">
    <property type="term" value="F:ditrans,polycis-undecaprenyl-diphosphate synthase [(2E,6E)-farnesyl-diphosphate specific] activity"/>
    <property type="evidence" value="ECO:0007669"/>
    <property type="project" value="TreeGrafter"/>
</dbReference>
<dbReference type="GO" id="GO:0000287">
    <property type="term" value="F:magnesium ion binding"/>
    <property type="evidence" value="ECO:0007669"/>
    <property type="project" value="UniProtKB-UniRule"/>
</dbReference>
<dbReference type="GO" id="GO:0030145">
    <property type="term" value="F:manganese ion binding"/>
    <property type="evidence" value="ECO:0007669"/>
    <property type="project" value="TreeGrafter"/>
</dbReference>
<dbReference type="GO" id="GO:0016094">
    <property type="term" value="P:polyprenol biosynthetic process"/>
    <property type="evidence" value="ECO:0007669"/>
    <property type="project" value="TreeGrafter"/>
</dbReference>
<dbReference type="CDD" id="cd00475">
    <property type="entry name" value="Cis_IPPS"/>
    <property type="match status" value="1"/>
</dbReference>
<dbReference type="FunFam" id="3.40.1180.10:FF:000001">
    <property type="entry name" value="(2E,6E)-farnesyl-diphosphate-specific ditrans,polycis-undecaprenyl-diphosphate synthase"/>
    <property type="match status" value="1"/>
</dbReference>
<dbReference type="Gene3D" id="3.40.1180.10">
    <property type="entry name" value="Decaprenyl diphosphate synthase-like"/>
    <property type="match status" value="1"/>
</dbReference>
<dbReference type="HAMAP" id="MF_01139">
    <property type="entry name" value="ISPT"/>
    <property type="match status" value="1"/>
</dbReference>
<dbReference type="InterPro" id="IPR001441">
    <property type="entry name" value="UPP_synth-like"/>
</dbReference>
<dbReference type="InterPro" id="IPR018520">
    <property type="entry name" value="UPP_synth-like_CS"/>
</dbReference>
<dbReference type="InterPro" id="IPR036424">
    <property type="entry name" value="UPP_synth-like_sf"/>
</dbReference>
<dbReference type="NCBIfam" id="NF011405">
    <property type="entry name" value="PRK14830.1"/>
    <property type="match status" value="1"/>
</dbReference>
<dbReference type="NCBIfam" id="TIGR00055">
    <property type="entry name" value="uppS"/>
    <property type="match status" value="1"/>
</dbReference>
<dbReference type="PANTHER" id="PTHR10291:SF0">
    <property type="entry name" value="DEHYDRODOLICHYL DIPHOSPHATE SYNTHASE 2"/>
    <property type="match status" value="1"/>
</dbReference>
<dbReference type="PANTHER" id="PTHR10291">
    <property type="entry name" value="DEHYDRODOLICHYL DIPHOSPHATE SYNTHASE FAMILY MEMBER"/>
    <property type="match status" value="1"/>
</dbReference>
<dbReference type="Pfam" id="PF01255">
    <property type="entry name" value="Prenyltransf"/>
    <property type="match status" value="1"/>
</dbReference>
<dbReference type="SUPFAM" id="SSF64005">
    <property type="entry name" value="Undecaprenyl diphosphate synthase"/>
    <property type="match status" value="1"/>
</dbReference>
<dbReference type="PROSITE" id="PS01066">
    <property type="entry name" value="UPP_SYNTHASE"/>
    <property type="match status" value="1"/>
</dbReference>
<reference key="1">
    <citation type="journal article" date="2002" name="Proc. Natl. Acad. Sci. U.S.A.">
        <title>Genome sequence and comparative microarray analysis of serotype M18 group A Streptococcus strains associated with acute rheumatic fever outbreaks.</title>
        <authorList>
            <person name="Smoot J.C."/>
            <person name="Barbian K.D."/>
            <person name="Van Gompel J.J."/>
            <person name="Smoot L.M."/>
            <person name="Chaussee M.S."/>
            <person name="Sylva G.L."/>
            <person name="Sturdevant D.E."/>
            <person name="Ricklefs S.M."/>
            <person name="Porcella S.F."/>
            <person name="Parkins L.D."/>
            <person name="Beres S.B."/>
            <person name="Campbell D.S."/>
            <person name="Smith T.M."/>
            <person name="Zhang Q."/>
            <person name="Kapur V."/>
            <person name="Daly J.A."/>
            <person name="Veasy L.G."/>
            <person name="Musser J.M."/>
        </authorList>
    </citation>
    <scope>NUCLEOTIDE SEQUENCE [LARGE SCALE GENOMIC DNA]</scope>
    <source>
        <strain>MGAS8232</strain>
    </source>
</reference>
<feature type="chain" id="PRO_0000123695" description="Isoprenyl transferase">
    <location>
        <begin position="1"/>
        <end position="249"/>
    </location>
</feature>
<feature type="active site" evidence="1">
    <location>
        <position position="25"/>
    </location>
</feature>
<feature type="active site" description="Proton acceptor" evidence="1">
    <location>
        <position position="73"/>
    </location>
</feature>
<feature type="binding site" evidence="1">
    <location>
        <position position="25"/>
    </location>
    <ligand>
        <name>Mg(2+)</name>
        <dbReference type="ChEBI" id="CHEBI:18420"/>
    </ligand>
</feature>
<feature type="binding site" evidence="1">
    <location>
        <begin position="26"/>
        <end position="29"/>
    </location>
    <ligand>
        <name>substrate</name>
    </ligand>
</feature>
<feature type="binding site" evidence="1">
    <location>
        <position position="30"/>
    </location>
    <ligand>
        <name>substrate</name>
    </ligand>
</feature>
<feature type="binding site" evidence="1">
    <location>
        <position position="38"/>
    </location>
    <ligand>
        <name>substrate</name>
    </ligand>
</feature>
<feature type="binding site" evidence="1">
    <location>
        <position position="42"/>
    </location>
    <ligand>
        <name>substrate</name>
    </ligand>
</feature>
<feature type="binding site" evidence="1">
    <location>
        <begin position="70"/>
        <end position="72"/>
    </location>
    <ligand>
        <name>substrate</name>
    </ligand>
</feature>
<feature type="binding site" evidence="1">
    <location>
        <position position="74"/>
    </location>
    <ligand>
        <name>substrate</name>
    </ligand>
</feature>
<feature type="binding site" evidence="1">
    <location>
        <position position="76"/>
    </location>
    <ligand>
        <name>substrate</name>
    </ligand>
</feature>
<feature type="binding site" evidence="1">
    <location>
        <position position="197"/>
    </location>
    <ligand>
        <name>substrate</name>
    </ligand>
</feature>
<feature type="binding site" evidence="1">
    <location>
        <begin position="203"/>
        <end position="205"/>
    </location>
    <ligand>
        <name>substrate</name>
    </ligand>
</feature>
<feature type="binding site" evidence="1">
    <location>
        <position position="216"/>
    </location>
    <ligand>
        <name>Mg(2+)</name>
        <dbReference type="ChEBI" id="CHEBI:18420"/>
    </ligand>
</feature>
<proteinExistence type="inferred from homology"/>
<protein>
    <recommendedName>
        <fullName evidence="1">Isoprenyl transferase</fullName>
        <ecNumber evidence="1">2.5.1.-</ecNumber>
    </recommendedName>
</protein>
<accession>Q8NZB2</accession>
<organism>
    <name type="scientific">Streptococcus pyogenes serotype M18 (strain MGAS8232)</name>
    <dbReference type="NCBI Taxonomy" id="186103"/>
    <lineage>
        <taxon>Bacteria</taxon>
        <taxon>Bacillati</taxon>
        <taxon>Bacillota</taxon>
        <taxon>Bacilli</taxon>
        <taxon>Lactobacillales</taxon>
        <taxon>Streptococcaceae</taxon>
        <taxon>Streptococcus</taxon>
    </lineage>
</organism>
<comment type="function">
    <text evidence="1">Catalyzes the condensation of isopentenyl diphosphate (IPP) with allylic pyrophosphates generating different type of terpenoids.</text>
</comment>
<comment type="cofactor">
    <cofactor evidence="1">
        <name>Mg(2+)</name>
        <dbReference type="ChEBI" id="CHEBI:18420"/>
    </cofactor>
    <text evidence="1">Binds 2 magnesium ions per subunit.</text>
</comment>
<comment type="subunit">
    <text evidence="1">Homodimer.</text>
</comment>
<comment type="similarity">
    <text evidence="1">Belongs to the UPP synthase family.</text>
</comment>
<sequence length="249" mass="28227">MFGLKAKSTKKVLGSIPKHIGIIMDGNGRWAKKRLKPRVFGHKAGMDALQEVTITASELGVKVLTVYAFSTENWSRPQDEVSFIMNLPVAFFDKYVPVLHENNVKIQMIGETSRLPEDTLAALNAAIDKTKRNTGLILNFALNYGGRAEITSAVRFIAQDVLDAKLNPGDITEDLIANYLMTDHLPYLYRDPDLIIRTSGELRLSNFLPWQSAYSEFYFTPVLWPDFKKAELLKAIADYNRRQRRFGKV</sequence>
<name>ISPT_STRP8</name>